<gene>
    <name evidence="1" type="primary">valS</name>
    <name type="ordered locus">lpp0785</name>
</gene>
<name>SYV_LEGPA</name>
<accession>Q5X728</accession>
<dbReference type="EC" id="6.1.1.9" evidence="1"/>
<dbReference type="EMBL" id="CR628336">
    <property type="protein sequence ID" value="CAH11933.1"/>
    <property type="molecule type" value="Genomic_DNA"/>
</dbReference>
<dbReference type="RefSeq" id="WP_010946456.1">
    <property type="nucleotide sequence ID" value="NC_006368.1"/>
</dbReference>
<dbReference type="SMR" id="Q5X728"/>
<dbReference type="KEGG" id="lpp:lpp0785"/>
<dbReference type="LegioList" id="lpp0785"/>
<dbReference type="HOGENOM" id="CLU_001493_0_2_6"/>
<dbReference type="GO" id="GO:0005829">
    <property type="term" value="C:cytosol"/>
    <property type="evidence" value="ECO:0007669"/>
    <property type="project" value="TreeGrafter"/>
</dbReference>
<dbReference type="GO" id="GO:0002161">
    <property type="term" value="F:aminoacyl-tRNA deacylase activity"/>
    <property type="evidence" value="ECO:0007669"/>
    <property type="project" value="InterPro"/>
</dbReference>
<dbReference type="GO" id="GO:0005524">
    <property type="term" value="F:ATP binding"/>
    <property type="evidence" value="ECO:0007669"/>
    <property type="project" value="UniProtKB-UniRule"/>
</dbReference>
<dbReference type="GO" id="GO:0004832">
    <property type="term" value="F:valine-tRNA ligase activity"/>
    <property type="evidence" value="ECO:0007669"/>
    <property type="project" value="UniProtKB-UniRule"/>
</dbReference>
<dbReference type="GO" id="GO:0006438">
    <property type="term" value="P:valyl-tRNA aminoacylation"/>
    <property type="evidence" value="ECO:0007669"/>
    <property type="project" value="UniProtKB-UniRule"/>
</dbReference>
<dbReference type="CDD" id="cd07962">
    <property type="entry name" value="Anticodon_Ia_Val"/>
    <property type="match status" value="1"/>
</dbReference>
<dbReference type="CDD" id="cd00817">
    <property type="entry name" value="ValRS_core"/>
    <property type="match status" value="1"/>
</dbReference>
<dbReference type="FunFam" id="1.10.287.380:FF:000001">
    <property type="entry name" value="Valine--tRNA ligase"/>
    <property type="match status" value="1"/>
</dbReference>
<dbReference type="FunFam" id="3.40.50.620:FF:000073">
    <property type="entry name" value="Valine--tRNA ligase"/>
    <property type="match status" value="1"/>
</dbReference>
<dbReference type="FunFam" id="1.10.730.10:FF:000009">
    <property type="entry name" value="Valine--tRNA ligase, mitochondrial"/>
    <property type="match status" value="1"/>
</dbReference>
<dbReference type="FunFam" id="3.40.50.620:FF:000020">
    <property type="entry name" value="Valine--tRNA ligase, mitochondrial"/>
    <property type="match status" value="1"/>
</dbReference>
<dbReference type="FunFam" id="3.90.740.10:FF:000005">
    <property type="entry name" value="Valine--tRNA ligase, mitochondrial"/>
    <property type="match status" value="1"/>
</dbReference>
<dbReference type="Gene3D" id="3.40.50.620">
    <property type="entry name" value="HUPs"/>
    <property type="match status" value="2"/>
</dbReference>
<dbReference type="Gene3D" id="1.10.730.10">
    <property type="entry name" value="Isoleucyl-tRNA Synthetase, Domain 1"/>
    <property type="match status" value="1"/>
</dbReference>
<dbReference type="Gene3D" id="1.10.287.380">
    <property type="entry name" value="Valyl-tRNA synthetase, C-terminal domain"/>
    <property type="match status" value="1"/>
</dbReference>
<dbReference type="HAMAP" id="MF_02004">
    <property type="entry name" value="Val_tRNA_synth_type1"/>
    <property type="match status" value="1"/>
</dbReference>
<dbReference type="InterPro" id="IPR001412">
    <property type="entry name" value="aa-tRNA-synth_I_CS"/>
</dbReference>
<dbReference type="InterPro" id="IPR002300">
    <property type="entry name" value="aa-tRNA-synth_Ia"/>
</dbReference>
<dbReference type="InterPro" id="IPR033705">
    <property type="entry name" value="Anticodon_Ia_Val"/>
</dbReference>
<dbReference type="InterPro" id="IPR013155">
    <property type="entry name" value="M/V/L/I-tRNA-synth_anticd-bd"/>
</dbReference>
<dbReference type="InterPro" id="IPR014729">
    <property type="entry name" value="Rossmann-like_a/b/a_fold"/>
</dbReference>
<dbReference type="InterPro" id="IPR010978">
    <property type="entry name" value="tRNA-bd_arm"/>
</dbReference>
<dbReference type="InterPro" id="IPR009080">
    <property type="entry name" value="tRNAsynth_Ia_anticodon-bd"/>
</dbReference>
<dbReference type="InterPro" id="IPR037118">
    <property type="entry name" value="Val-tRNA_synth_C_sf"/>
</dbReference>
<dbReference type="InterPro" id="IPR019499">
    <property type="entry name" value="Val-tRNA_synth_tRNA-bd"/>
</dbReference>
<dbReference type="InterPro" id="IPR009008">
    <property type="entry name" value="Val/Leu/Ile-tRNA-synth_edit"/>
</dbReference>
<dbReference type="InterPro" id="IPR002303">
    <property type="entry name" value="Valyl-tRNA_ligase"/>
</dbReference>
<dbReference type="NCBIfam" id="NF004349">
    <property type="entry name" value="PRK05729.1"/>
    <property type="match status" value="1"/>
</dbReference>
<dbReference type="NCBIfam" id="TIGR00422">
    <property type="entry name" value="valS"/>
    <property type="match status" value="1"/>
</dbReference>
<dbReference type="PANTHER" id="PTHR11946:SF93">
    <property type="entry name" value="VALINE--TRNA LIGASE, CHLOROPLASTIC_MITOCHONDRIAL 2"/>
    <property type="match status" value="1"/>
</dbReference>
<dbReference type="PANTHER" id="PTHR11946">
    <property type="entry name" value="VALYL-TRNA SYNTHETASES"/>
    <property type="match status" value="1"/>
</dbReference>
<dbReference type="Pfam" id="PF08264">
    <property type="entry name" value="Anticodon_1"/>
    <property type="match status" value="1"/>
</dbReference>
<dbReference type="Pfam" id="PF00133">
    <property type="entry name" value="tRNA-synt_1"/>
    <property type="match status" value="1"/>
</dbReference>
<dbReference type="Pfam" id="PF10458">
    <property type="entry name" value="Val_tRNA-synt_C"/>
    <property type="match status" value="1"/>
</dbReference>
<dbReference type="PRINTS" id="PR00986">
    <property type="entry name" value="TRNASYNTHVAL"/>
</dbReference>
<dbReference type="SUPFAM" id="SSF47323">
    <property type="entry name" value="Anticodon-binding domain of a subclass of class I aminoacyl-tRNA synthetases"/>
    <property type="match status" value="1"/>
</dbReference>
<dbReference type="SUPFAM" id="SSF52374">
    <property type="entry name" value="Nucleotidylyl transferase"/>
    <property type="match status" value="1"/>
</dbReference>
<dbReference type="SUPFAM" id="SSF46589">
    <property type="entry name" value="tRNA-binding arm"/>
    <property type="match status" value="1"/>
</dbReference>
<dbReference type="SUPFAM" id="SSF50677">
    <property type="entry name" value="ValRS/IleRS/LeuRS editing domain"/>
    <property type="match status" value="1"/>
</dbReference>
<dbReference type="PROSITE" id="PS00178">
    <property type="entry name" value="AA_TRNA_LIGASE_I"/>
    <property type="match status" value="1"/>
</dbReference>
<reference key="1">
    <citation type="journal article" date="2004" name="Nat. Genet.">
        <title>Evidence in the Legionella pneumophila genome for exploitation of host cell functions and high genome plasticity.</title>
        <authorList>
            <person name="Cazalet C."/>
            <person name="Rusniok C."/>
            <person name="Brueggemann H."/>
            <person name="Zidane N."/>
            <person name="Magnier A."/>
            <person name="Ma L."/>
            <person name="Tichit M."/>
            <person name="Jarraud S."/>
            <person name="Bouchier C."/>
            <person name="Vandenesch F."/>
            <person name="Kunst F."/>
            <person name="Etienne J."/>
            <person name="Glaser P."/>
            <person name="Buchrieser C."/>
        </authorList>
    </citation>
    <scope>NUCLEOTIDE SEQUENCE [LARGE SCALE GENOMIC DNA]</scope>
    <source>
        <strain>Paris</strain>
    </source>
</reference>
<protein>
    <recommendedName>
        <fullName evidence="1">Valine--tRNA ligase</fullName>
        <ecNumber evidence="1">6.1.1.9</ecNumber>
    </recommendedName>
    <alternativeName>
        <fullName evidence="1">Valyl-tRNA synthetase</fullName>
        <shortName evidence="1">ValRS</shortName>
    </alternativeName>
</protein>
<keyword id="KW-0030">Aminoacyl-tRNA synthetase</keyword>
<keyword id="KW-0067">ATP-binding</keyword>
<keyword id="KW-0175">Coiled coil</keyword>
<keyword id="KW-0963">Cytoplasm</keyword>
<keyword id="KW-0436">Ligase</keyword>
<keyword id="KW-0547">Nucleotide-binding</keyword>
<keyword id="KW-0648">Protein biosynthesis</keyword>
<feature type="chain" id="PRO_0000224495" description="Valine--tRNA ligase">
    <location>
        <begin position="1"/>
        <end position="921"/>
    </location>
</feature>
<feature type="coiled-coil region" evidence="1">
    <location>
        <begin position="849"/>
        <end position="921"/>
    </location>
</feature>
<feature type="short sequence motif" description="'HIGH' region">
    <location>
        <begin position="40"/>
        <end position="50"/>
    </location>
</feature>
<feature type="short sequence motif" description="'KMSKS' region">
    <location>
        <begin position="522"/>
        <end position="526"/>
    </location>
</feature>
<feature type="binding site" evidence="1">
    <location>
        <position position="525"/>
    </location>
    <ligand>
        <name>ATP</name>
        <dbReference type="ChEBI" id="CHEBI:30616"/>
    </ligand>
</feature>
<organism>
    <name type="scientific">Legionella pneumophila (strain Paris)</name>
    <dbReference type="NCBI Taxonomy" id="297246"/>
    <lineage>
        <taxon>Bacteria</taxon>
        <taxon>Pseudomonadati</taxon>
        <taxon>Pseudomonadota</taxon>
        <taxon>Gammaproteobacteria</taxon>
        <taxon>Legionellales</taxon>
        <taxon>Legionellaceae</taxon>
        <taxon>Legionella</taxon>
    </lineage>
</organism>
<proteinExistence type="inferred from homology"/>
<comment type="function">
    <text evidence="1">Catalyzes the attachment of valine to tRNA(Val). As ValRS can inadvertently accommodate and process structurally similar amino acids such as threonine, to avoid such errors, it has a 'posttransfer' editing activity that hydrolyzes mischarged Thr-tRNA(Val) in a tRNA-dependent manner.</text>
</comment>
<comment type="catalytic activity">
    <reaction evidence="1">
        <text>tRNA(Val) + L-valine + ATP = L-valyl-tRNA(Val) + AMP + diphosphate</text>
        <dbReference type="Rhea" id="RHEA:10704"/>
        <dbReference type="Rhea" id="RHEA-COMP:9672"/>
        <dbReference type="Rhea" id="RHEA-COMP:9708"/>
        <dbReference type="ChEBI" id="CHEBI:30616"/>
        <dbReference type="ChEBI" id="CHEBI:33019"/>
        <dbReference type="ChEBI" id="CHEBI:57762"/>
        <dbReference type="ChEBI" id="CHEBI:78442"/>
        <dbReference type="ChEBI" id="CHEBI:78537"/>
        <dbReference type="ChEBI" id="CHEBI:456215"/>
        <dbReference type="EC" id="6.1.1.9"/>
    </reaction>
</comment>
<comment type="subunit">
    <text evidence="1">Monomer.</text>
</comment>
<comment type="subcellular location">
    <subcellularLocation>
        <location evidence="1">Cytoplasm</location>
    </subcellularLocation>
</comment>
<comment type="domain">
    <text evidence="1">ValRS has two distinct active sites: one for aminoacylation and one for editing. The misactivated threonine is translocated from the active site to the editing site.</text>
</comment>
<comment type="domain">
    <text evidence="1">The C-terminal coiled-coil domain is crucial for aminoacylation activity.</text>
</comment>
<comment type="similarity">
    <text evidence="1">Belongs to the class-I aminoacyl-tRNA synthetase family. ValS type 1 subfamily.</text>
</comment>
<sequence>MDKTYSPEAIEKALYKKWESHHYFQPRGEGKRFCIMLPPPNVTGSLHMGHGFQHTIMDALTRYHRMLGDKTLWQPGTDHAGISTQLVVERQLEAQGVSRKDLTREQFLDKVWQWKEESGNTITQQMRRLGASVDWSRERFTMDEGLSAAVQKVFVQLYEEGLIYRGTRLVNWDPKLGTAVSDLEVLSEEEDGFLWHIRYPVVDSEEFLIVATTRPETLLGDCAVAIHPDDSRFRHLIGKQVHLPLCDRTIPVIADDYVDKEFGSGCVKITPAHDFNDHEVGKRHQLPQINILTKKGTINKNAPLKYQGMDRFVAREQIIKDLEKEGLLAKTEPHKLKVPRGEKSNVIIEPLLTDQWYVKTKPLAEPAIAAVKKGDIRFIPETWDKTYFQWMDNIEDWCISRQLWWGHRIPAWYDNHGNIYVGYSENDVRFKHKIDQSTPLKQDEDVLDTWFSSALWPFSTLGWPERTPELEQFYPTSVLVTGFDIIFFWVARMIMMGLKFTGKIPFKEVFITGLIRDSEGHKMSKSKGNVLDPLDIVDGIDLDSLIAKRTSNLMLNSVRDRITKATRKEFPEGISAYGTDALRFTYCSLASTGRNVRFDLGRVEGYRNFCNKLWNAARYVLLNTDEEQIDFGDGAFQYSPADQWILSRLQNTVSKVHHYFETYRFDLLANTLYEFVWHEYCDWYLELSKPILQDDQALSAMKRGTRRTLIHVLDQILKLLHPLMPFITEEIWQKTTKFTSENGISIMLSTYPKVNEEFINPAIEEELDWLKSAIQSLRTIRSEMSISPAKLIPLYIRNITPELKERIAKYEKILKTLSKIDKINYLAPDEKVPVSATAVLGEIELLIPMADLIDKEAELSRLNKELAKLNKDIELAQGKLNNPKFTDKAPEEIIAKEKDKLAQAQVAKDKLLQHKNRIESL</sequence>
<evidence type="ECO:0000255" key="1">
    <source>
        <dbReference type="HAMAP-Rule" id="MF_02004"/>
    </source>
</evidence>